<gene>
    <name evidence="1" type="primary">hspQ</name>
    <name type="ordered locus">KPK_3574</name>
</gene>
<dbReference type="EMBL" id="CP000964">
    <property type="protein sequence ID" value="ACI09706.1"/>
    <property type="molecule type" value="Genomic_DNA"/>
</dbReference>
<dbReference type="SMR" id="B5XY39"/>
<dbReference type="KEGG" id="kpe:KPK_3574"/>
<dbReference type="HOGENOM" id="CLU_123865_1_0_6"/>
<dbReference type="Proteomes" id="UP000001734">
    <property type="component" value="Chromosome"/>
</dbReference>
<dbReference type="GO" id="GO:0005737">
    <property type="term" value="C:cytoplasm"/>
    <property type="evidence" value="ECO:0007669"/>
    <property type="project" value="UniProtKB-SubCell"/>
</dbReference>
<dbReference type="GO" id="GO:0003677">
    <property type="term" value="F:DNA binding"/>
    <property type="evidence" value="ECO:0007669"/>
    <property type="project" value="InterPro"/>
</dbReference>
<dbReference type="GO" id="GO:0009408">
    <property type="term" value="P:response to heat"/>
    <property type="evidence" value="ECO:0007669"/>
    <property type="project" value="UniProtKB-UniRule"/>
</dbReference>
<dbReference type="Gene3D" id="2.30.30.390">
    <property type="entry name" value="Hemimethylated DNA-binding domain"/>
    <property type="match status" value="1"/>
</dbReference>
<dbReference type="HAMAP" id="MF_01194">
    <property type="entry name" value="HspQ"/>
    <property type="match status" value="1"/>
</dbReference>
<dbReference type="InterPro" id="IPR011722">
    <property type="entry name" value="Hemimethylated_DNA-bd_dom"/>
</dbReference>
<dbReference type="InterPro" id="IPR036623">
    <property type="entry name" value="Hemimethylated_DNA-bd_sf"/>
</dbReference>
<dbReference type="InterPro" id="IPR022866">
    <property type="entry name" value="HspQ"/>
</dbReference>
<dbReference type="NCBIfam" id="NF010729">
    <property type="entry name" value="PRK14129.1"/>
    <property type="match status" value="1"/>
</dbReference>
<dbReference type="NCBIfam" id="TIGR02097">
    <property type="entry name" value="yccV"/>
    <property type="match status" value="1"/>
</dbReference>
<dbReference type="Pfam" id="PF08755">
    <property type="entry name" value="YccV-like"/>
    <property type="match status" value="1"/>
</dbReference>
<dbReference type="SMART" id="SM00992">
    <property type="entry name" value="YccV-like"/>
    <property type="match status" value="1"/>
</dbReference>
<dbReference type="SUPFAM" id="SSF141255">
    <property type="entry name" value="YccV-like"/>
    <property type="match status" value="1"/>
</dbReference>
<feature type="chain" id="PRO_1000138412" description="Heat shock protein HspQ">
    <location>
        <begin position="1"/>
        <end position="105"/>
    </location>
</feature>
<evidence type="ECO:0000255" key="1">
    <source>
        <dbReference type="HAMAP-Rule" id="MF_01194"/>
    </source>
</evidence>
<reference key="1">
    <citation type="journal article" date="2008" name="PLoS Genet.">
        <title>Complete genome sequence of the N2-fixing broad host range endophyte Klebsiella pneumoniae 342 and virulence predictions verified in mice.</title>
        <authorList>
            <person name="Fouts D.E."/>
            <person name="Tyler H.L."/>
            <person name="DeBoy R.T."/>
            <person name="Daugherty S."/>
            <person name="Ren Q."/>
            <person name="Badger J.H."/>
            <person name="Durkin A.S."/>
            <person name="Huot H."/>
            <person name="Shrivastava S."/>
            <person name="Kothari S."/>
            <person name="Dodson R.J."/>
            <person name="Mohamoud Y."/>
            <person name="Khouri H."/>
            <person name="Roesch L.F.W."/>
            <person name="Krogfelt K.A."/>
            <person name="Struve C."/>
            <person name="Triplett E.W."/>
            <person name="Methe B.A."/>
        </authorList>
    </citation>
    <scope>NUCLEOTIDE SEQUENCE [LARGE SCALE GENOMIC DNA]</scope>
    <source>
        <strain>342</strain>
    </source>
</reference>
<organism>
    <name type="scientific">Klebsiella pneumoniae (strain 342)</name>
    <dbReference type="NCBI Taxonomy" id="507522"/>
    <lineage>
        <taxon>Bacteria</taxon>
        <taxon>Pseudomonadati</taxon>
        <taxon>Pseudomonadota</taxon>
        <taxon>Gammaproteobacteria</taxon>
        <taxon>Enterobacterales</taxon>
        <taxon>Enterobacteriaceae</taxon>
        <taxon>Klebsiella/Raoultella group</taxon>
        <taxon>Klebsiella</taxon>
        <taxon>Klebsiella pneumoniae complex</taxon>
    </lineage>
</organism>
<proteinExistence type="inferred from homology"/>
<accession>B5XY39</accession>
<sequence length="105" mass="11881">MIASKFGIGQQVRHTLLGYLGVIVDVDPEYSLAEPEEDEIAANDELRAAPWYHVVMEDDDGQPIHTYLAEAQLSSETRDEHPEQPSLDELAKTIRQQLQAPRLRN</sequence>
<comment type="function">
    <text evidence="1">Involved in the degradation of certain denaturated proteins, including DnaA, during heat shock stress.</text>
</comment>
<comment type="subcellular location">
    <subcellularLocation>
        <location evidence="1">Cytoplasm</location>
    </subcellularLocation>
</comment>
<comment type="similarity">
    <text evidence="1">Belongs to the HspQ family.</text>
</comment>
<protein>
    <recommendedName>
        <fullName evidence="1">Heat shock protein HspQ</fullName>
    </recommendedName>
</protein>
<name>HSPQ_KLEP3</name>
<keyword id="KW-0963">Cytoplasm</keyword>
<keyword id="KW-0346">Stress response</keyword>